<gene>
    <name evidence="1" type="primary">rnz</name>
    <name type="ordered locus">SaurJH1_1592</name>
</gene>
<name>RNZ_STAA2</name>
<organism>
    <name type="scientific">Staphylococcus aureus (strain JH1)</name>
    <dbReference type="NCBI Taxonomy" id="359787"/>
    <lineage>
        <taxon>Bacteria</taxon>
        <taxon>Bacillati</taxon>
        <taxon>Bacillota</taxon>
        <taxon>Bacilli</taxon>
        <taxon>Bacillales</taxon>
        <taxon>Staphylococcaceae</taxon>
        <taxon>Staphylococcus</taxon>
    </lineage>
</organism>
<evidence type="ECO:0000255" key="1">
    <source>
        <dbReference type="HAMAP-Rule" id="MF_01818"/>
    </source>
</evidence>
<reference key="1">
    <citation type="submission" date="2007-06" db="EMBL/GenBank/DDBJ databases">
        <title>Complete sequence of chromosome of Staphylococcus aureus subsp. aureus JH1.</title>
        <authorList>
            <consortium name="US DOE Joint Genome Institute"/>
            <person name="Copeland A."/>
            <person name="Lucas S."/>
            <person name="Lapidus A."/>
            <person name="Barry K."/>
            <person name="Detter J.C."/>
            <person name="Glavina del Rio T."/>
            <person name="Hammon N."/>
            <person name="Israni S."/>
            <person name="Dalin E."/>
            <person name="Tice H."/>
            <person name="Pitluck S."/>
            <person name="Chain P."/>
            <person name="Malfatti S."/>
            <person name="Shin M."/>
            <person name="Vergez L."/>
            <person name="Schmutz J."/>
            <person name="Larimer F."/>
            <person name="Land M."/>
            <person name="Hauser L."/>
            <person name="Kyrpides N."/>
            <person name="Ivanova N."/>
            <person name="Tomasz A."/>
            <person name="Richardson P."/>
        </authorList>
    </citation>
    <scope>NUCLEOTIDE SEQUENCE [LARGE SCALE GENOMIC DNA]</scope>
    <source>
        <strain>JH1</strain>
    </source>
</reference>
<feature type="chain" id="PRO_1000088342" description="Ribonuclease Z">
    <location>
        <begin position="1"/>
        <end position="306"/>
    </location>
</feature>
<feature type="active site" description="Proton acceptor" evidence="1">
    <location>
        <position position="67"/>
    </location>
</feature>
<feature type="binding site" evidence="1">
    <location>
        <position position="63"/>
    </location>
    <ligand>
        <name>Zn(2+)</name>
        <dbReference type="ChEBI" id="CHEBI:29105"/>
        <label>1</label>
        <note>catalytic</note>
    </ligand>
</feature>
<feature type="binding site" evidence="1">
    <location>
        <position position="65"/>
    </location>
    <ligand>
        <name>Zn(2+)</name>
        <dbReference type="ChEBI" id="CHEBI:29105"/>
        <label>1</label>
        <note>catalytic</note>
    </ligand>
</feature>
<feature type="binding site" evidence="1">
    <location>
        <position position="67"/>
    </location>
    <ligand>
        <name>Zn(2+)</name>
        <dbReference type="ChEBI" id="CHEBI:29105"/>
        <label>2</label>
        <note>catalytic</note>
    </ligand>
</feature>
<feature type="binding site" evidence="1">
    <location>
        <position position="68"/>
    </location>
    <ligand>
        <name>Zn(2+)</name>
        <dbReference type="ChEBI" id="CHEBI:29105"/>
        <label>2</label>
        <note>catalytic</note>
    </ligand>
</feature>
<feature type="binding site" evidence="1">
    <location>
        <position position="141"/>
    </location>
    <ligand>
        <name>Zn(2+)</name>
        <dbReference type="ChEBI" id="CHEBI:29105"/>
        <label>1</label>
        <note>catalytic</note>
    </ligand>
</feature>
<feature type="binding site" evidence="1">
    <location>
        <position position="211"/>
    </location>
    <ligand>
        <name>Zn(2+)</name>
        <dbReference type="ChEBI" id="CHEBI:29105"/>
        <label>1</label>
        <note>catalytic</note>
    </ligand>
</feature>
<feature type="binding site" evidence="1">
    <location>
        <position position="211"/>
    </location>
    <ligand>
        <name>Zn(2+)</name>
        <dbReference type="ChEBI" id="CHEBI:29105"/>
        <label>2</label>
        <note>catalytic</note>
    </ligand>
</feature>
<feature type="binding site" evidence="1">
    <location>
        <position position="269"/>
    </location>
    <ligand>
        <name>Zn(2+)</name>
        <dbReference type="ChEBI" id="CHEBI:29105"/>
        <label>2</label>
        <note>catalytic</note>
    </ligand>
</feature>
<protein>
    <recommendedName>
        <fullName evidence="1">Ribonuclease Z</fullName>
        <shortName evidence="1">RNase Z</shortName>
        <ecNumber evidence="1">3.1.26.11</ecNumber>
    </recommendedName>
    <alternativeName>
        <fullName evidence="1">tRNA 3 endonuclease</fullName>
    </alternativeName>
    <alternativeName>
        <fullName evidence="1">tRNase Z</fullName>
    </alternativeName>
</protein>
<comment type="function">
    <text evidence="1">Zinc phosphodiesterase, which displays some tRNA 3'-processing endonuclease activity. Probably involved in tRNA maturation, by removing a 3'-trailer from precursor tRNA.</text>
</comment>
<comment type="catalytic activity">
    <reaction evidence="1">
        <text>Endonucleolytic cleavage of RNA, removing extra 3' nucleotides from tRNA precursor, generating 3' termini of tRNAs. A 3'-hydroxy group is left at the tRNA terminus and a 5'-phosphoryl group is left at the trailer molecule.</text>
        <dbReference type="EC" id="3.1.26.11"/>
    </reaction>
</comment>
<comment type="cofactor">
    <cofactor evidence="1">
        <name>Zn(2+)</name>
        <dbReference type="ChEBI" id="CHEBI:29105"/>
    </cofactor>
    <text evidence="1">Binds 2 Zn(2+) ions.</text>
</comment>
<comment type="subunit">
    <text evidence="1">Homodimer.</text>
</comment>
<comment type="similarity">
    <text evidence="1">Belongs to the RNase Z family.</text>
</comment>
<accession>A6U1X3</accession>
<dbReference type="EC" id="3.1.26.11" evidence="1"/>
<dbReference type="EMBL" id="CP000736">
    <property type="protein sequence ID" value="ABR52441.1"/>
    <property type="molecule type" value="Genomic_DNA"/>
</dbReference>
<dbReference type="SMR" id="A6U1X3"/>
<dbReference type="KEGG" id="sah:SaurJH1_1592"/>
<dbReference type="HOGENOM" id="CLU_031317_2_0_9"/>
<dbReference type="GO" id="GO:0042781">
    <property type="term" value="F:3'-tRNA processing endoribonuclease activity"/>
    <property type="evidence" value="ECO:0007669"/>
    <property type="project" value="UniProtKB-UniRule"/>
</dbReference>
<dbReference type="GO" id="GO:0008270">
    <property type="term" value="F:zinc ion binding"/>
    <property type="evidence" value="ECO:0007669"/>
    <property type="project" value="UniProtKB-UniRule"/>
</dbReference>
<dbReference type="CDD" id="cd07717">
    <property type="entry name" value="RNaseZ_ZiPD-like_MBL-fold"/>
    <property type="match status" value="1"/>
</dbReference>
<dbReference type="FunFam" id="3.60.15.10:FF:000002">
    <property type="entry name" value="Ribonuclease Z"/>
    <property type="match status" value="1"/>
</dbReference>
<dbReference type="Gene3D" id="3.60.15.10">
    <property type="entry name" value="Ribonuclease Z/Hydroxyacylglutathione hydrolase-like"/>
    <property type="match status" value="1"/>
</dbReference>
<dbReference type="HAMAP" id="MF_01818">
    <property type="entry name" value="RNase_Z_BN"/>
    <property type="match status" value="1"/>
</dbReference>
<dbReference type="InterPro" id="IPR036866">
    <property type="entry name" value="RibonucZ/Hydroxyglut_hydro"/>
</dbReference>
<dbReference type="InterPro" id="IPR013471">
    <property type="entry name" value="RNase_Z/BN"/>
</dbReference>
<dbReference type="InterPro" id="IPR027794">
    <property type="entry name" value="tRNase_Z_dom"/>
</dbReference>
<dbReference type="NCBIfam" id="NF000801">
    <property type="entry name" value="PRK00055.1-3"/>
    <property type="match status" value="1"/>
</dbReference>
<dbReference type="NCBIfam" id="TIGR02651">
    <property type="entry name" value="RNase_Z"/>
    <property type="match status" value="1"/>
</dbReference>
<dbReference type="PANTHER" id="PTHR46018">
    <property type="entry name" value="ZINC PHOSPHODIESTERASE ELAC PROTEIN 1"/>
    <property type="match status" value="1"/>
</dbReference>
<dbReference type="PANTHER" id="PTHR46018:SF2">
    <property type="entry name" value="ZINC PHOSPHODIESTERASE ELAC PROTEIN 1"/>
    <property type="match status" value="1"/>
</dbReference>
<dbReference type="Pfam" id="PF13691">
    <property type="entry name" value="Lactamase_B_4"/>
    <property type="match status" value="1"/>
</dbReference>
<dbReference type="SUPFAM" id="SSF56281">
    <property type="entry name" value="Metallo-hydrolase/oxidoreductase"/>
    <property type="match status" value="1"/>
</dbReference>
<sequence>MEVTFFGTSAGLPTKERNTQAIALNLEPYSNSIWLFDVGEGTQHQILHHAIKLGKVTHIFITHMHGDHIFGLPGLLSSRSFQGGEQKPLTLVGPKGIKAYVEMSMNLSESHLNYPITYIEIDDHLTYHHDGFTVEAHLLNHGIPSYGYRVMAPETTGTINVEALKNIGLEPGPKYQEVKSHDTFEHNGQVYQSKDFRGESKQGPVVAIFGDTKPCSNERVISRDADVMVHEATYIDGEKHLANNYHHSHIEDVFALIKEANVKRTLITHLSNRYNTEDINEIYQILIQNEDTPNFNFVKDFDSFKV</sequence>
<proteinExistence type="inferred from homology"/>
<keyword id="KW-0255">Endonuclease</keyword>
<keyword id="KW-0378">Hydrolase</keyword>
<keyword id="KW-0479">Metal-binding</keyword>
<keyword id="KW-0540">Nuclease</keyword>
<keyword id="KW-0819">tRNA processing</keyword>
<keyword id="KW-0862">Zinc</keyword>